<name>VNB_INBLN</name>
<organismHost>
    <name type="scientific">Homo sapiens</name>
    <name type="common">Human</name>
    <dbReference type="NCBI Taxonomy" id="9606"/>
</organismHost>
<accession>P67908</accession>
<accession>P16194</accession>
<accession>P16198</accession>
<comment type="function">
    <text evidence="1">Putative viral proton channel. May play a role in virus entry (By similarity).</text>
</comment>
<comment type="subunit">
    <text evidence="1">Dimer.</text>
</comment>
<comment type="subcellular location">
    <subcellularLocation>
        <location evidence="3">Virion membrane</location>
        <topology evidence="3">Single-pass type III membrane protein</topology>
    </subcellularLocation>
</comment>
<comment type="similarity">
    <text evidence="3">Belongs to the influenza viruses type B glycoprotein NB family.</text>
</comment>
<sequence length="99" mass="10915">MNNATFNYTNVNPISHIRGSVIITICVSFTVILTVFGYIAKIFTKNNCTNNDIGLRERIKCSGCEPFCNKRDDISSPRTGVDIPSFILPGLNLSESTPN</sequence>
<dbReference type="EMBL" id="M30632">
    <property type="protein sequence ID" value="AAA43730.1"/>
    <property type="molecule type" value="Genomic_RNA"/>
</dbReference>
<dbReference type="PIR" id="C36825">
    <property type="entry name" value="C36825"/>
</dbReference>
<dbReference type="GlyCosmos" id="P67908">
    <property type="glycosylation" value="2 sites, No reported glycans"/>
</dbReference>
<dbReference type="GO" id="GO:0033644">
    <property type="term" value="C:host cell membrane"/>
    <property type="evidence" value="ECO:0007669"/>
    <property type="project" value="UniProtKB-KW"/>
</dbReference>
<dbReference type="GO" id="GO:0016020">
    <property type="term" value="C:membrane"/>
    <property type="evidence" value="ECO:0007669"/>
    <property type="project" value="UniProtKB-KW"/>
</dbReference>
<dbReference type="GO" id="GO:0055036">
    <property type="term" value="C:virion membrane"/>
    <property type="evidence" value="ECO:0007669"/>
    <property type="project" value="UniProtKB-SubCell"/>
</dbReference>
<dbReference type="GO" id="GO:0015267">
    <property type="term" value="F:channel activity"/>
    <property type="evidence" value="ECO:0007669"/>
    <property type="project" value="UniProtKB-KW"/>
</dbReference>
<dbReference type="GO" id="GO:1902600">
    <property type="term" value="P:proton transmembrane transport"/>
    <property type="evidence" value="ECO:0007669"/>
    <property type="project" value="UniProtKB-KW"/>
</dbReference>
<dbReference type="InterPro" id="IPR007288">
    <property type="entry name" value="InfluenzaB_glycoprotein_NB"/>
</dbReference>
<dbReference type="Pfam" id="PF04159">
    <property type="entry name" value="NB"/>
    <property type="match status" value="1"/>
</dbReference>
<proteinExistence type="inferred from homology"/>
<keyword id="KW-0325">Glycoprotein</keyword>
<keyword id="KW-0375">Hydrogen ion transport</keyword>
<keyword id="KW-0407">Ion channel</keyword>
<keyword id="KW-0406">Ion transport</keyword>
<keyword id="KW-0472">Membrane</keyword>
<keyword id="KW-0735">Signal-anchor</keyword>
<keyword id="KW-0812">Transmembrane</keyword>
<keyword id="KW-1133">Transmembrane helix</keyword>
<keyword id="KW-0813">Transport</keyword>
<keyword id="KW-1182">Viral ion channel</keyword>
<keyword id="KW-0946">Virion</keyword>
<reference key="1">
    <citation type="journal article" date="1990" name="Virology">
        <title>Antigenic, sequence, and crystal variation in influenza B neuraminidase.</title>
        <authorList>
            <person name="Air G.M."/>
            <person name="Laver W.G."/>
            <person name="Luo M."/>
            <person name="Stray S.J."/>
            <person name="Legrone G."/>
            <person name="Webster R.G."/>
        </authorList>
    </citation>
    <scope>NUCLEOTIDE SEQUENCE [GENOMIC RNA]</scope>
</reference>
<organism>
    <name type="scientific">Influenza B virus (strain B/Leningrad/179/1986)</name>
    <dbReference type="NCBI Taxonomy" id="11536"/>
    <lineage>
        <taxon>Viruses</taxon>
        <taxon>Riboviria</taxon>
        <taxon>Orthornavirae</taxon>
        <taxon>Negarnaviricota</taxon>
        <taxon>Polyploviricotina</taxon>
        <taxon>Insthoviricetes</taxon>
        <taxon>Articulavirales</taxon>
        <taxon>Orthomyxoviridae</taxon>
        <taxon>Betainfluenzavirus</taxon>
        <taxon>Betainfluenzavirus influenzae</taxon>
        <taxon>Influenza B virus</taxon>
    </lineage>
</organism>
<evidence type="ECO:0000250" key="1"/>
<evidence type="ECO:0000255" key="2"/>
<evidence type="ECO:0000305" key="3"/>
<feature type="chain" id="PRO_0000078907" description="Glycoprotein NB">
    <location>
        <begin position="1"/>
        <end position="99"/>
    </location>
</feature>
<feature type="topological domain" description="Virion surface" evidence="2">
    <location>
        <begin position="1"/>
        <end position="18"/>
    </location>
</feature>
<feature type="transmembrane region" description="Helical; Signal-anchor for type III membrane protein" evidence="2">
    <location>
        <begin position="19"/>
        <end position="40"/>
    </location>
</feature>
<feature type="topological domain" description="Intravirion" evidence="2">
    <location>
        <begin position="41"/>
        <end position="99"/>
    </location>
</feature>
<feature type="glycosylation site" description="N-linked (GlcNAc...) asparagine; by host" evidence="2">
    <location>
        <position position="3"/>
    </location>
</feature>
<feature type="glycosylation site" description="N-linked (GlcNAc...) asparagine; by host" evidence="2">
    <location>
        <position position="7"/>
    </location>
</feature>
<gene>
    <name type="primary">NB</name>
</gene>
<protein>
    <recommendedName>
        <fullName>Glycoprotein NB</fullName>
    </recommendedName>
</protein>